<accession>Q819H7</accession>
<gene>
    <name evidence="1" type="primary">metE</name>
    <name type="ordered locus">BC_4003</name>
</gene>
<organism>
    <name type="scientific">Bacillus cereus (strain ATCC 14579 / DSM 31 / CCUG 7414 / JCM 2152 / NBRC 15305 / NCIMB 9373 / NCTC 2599 / NRRL B-3711)</name>
    <dbReference type="NCBI Taxonomy" id="226900"/>
    <lineage>
        <taxon>Bacteria</taxon>
        <taxon>Bacillati</taxon>
        <taxon>Bacillota</taxon>
        <taxon>Bacilli</taxon>
        <taxon>Bacillales</taxon>
        <taxon>Bacillaceae</taxon>
        <taxon>Bacillus</taxon>
        <taxon>Bacillus cereus group</taxon>
    </lineage>
</organism>
<protein>
    <recommendedName>
        <fullName evidence="1">5-methyltetrahydropteroyltriglutamate--homocysteine methyltransferase</fullName>
        <ecNumber evidence="1">2.1.1.14</ecNumber>
    </recommendedName>
    <alternativeName>
        <fullName evidence="1">Cobalamin-independent methionine synthase</fullName>
    </alternativeName>
    <alternativeName>
        <fullName evidence="1">Methionine synthase, vitamin-B12 independent isozyme</fullName>
    </alternativeName>
</protein>
<sequence>MAIQTSNLGYPRIGLQREWKKTLEAFWSNKIDEEQFLTTMKEIRLQHVKVQQEKGIELIPIGDFTYYDHVLDTAYMLGFIPSRFSEFTSYLDVYFAMARGSKDHVASEMTKWFNTNYHYIVPEYEEGLQISLKDNRPLRLYEEAKQELGVDGKPVILGPYTFLKLAKGYTQEQFPTILKQLVAPYVQLLSELHAAGAPAIQVDEPIFASLTKKEVQQAKEIYEAIRKEVPNATLLLQTYFDSVEENYEEIITFPVSGIGLDFIHGKEGNLNAISKYGFPADKTLAVGCIDGRNIWRADLDEVLELFTTLQKQVQTKDIIVQPSCSLLHTPIDKTEETHLSTELFDALAFANQKLEELVLIHSALTQGTESISNELETYRNVHHTIRSSAARNREDVKAARTALKEEDFSRPLPFEKRYELQQVALELPLLPTTTIGSFPQTTEVRQTRKEWRNGVISNEQYEQFIEKETEKWIRYQEEIGLDVLVHGEFERTDMVEYFGERLAGFSFTKNGWVQSYGSRCVKPPVIYGDVAFINGMTIKETVYAQSLTEKVVKGMLTGPVTILNWSFVRNDIPRKEVSYQIALALRHEIELLESSGIRVIQVDEPALREGMPLKEKDWDAYITWAVQSFLLATSSVANETQIHTHMCYSNFEDIVDAIRALDADVISIETSRSHGEFIDTLKHTTYEKGIGLGVYDIHSPRVPSKDEMYKIVEQSLEVCDPKYFWINPDCGLKTRRTEEVIPALEHMVQAAKDARSLLKTNA</sequence>
<dbReference type="EC" id="2.1.1.14" evidence="1"/>
<dbReference type="EMBL" id="AE016877">
    <property type="protein sequence ID" value="AAP10923.1"/>
    <property type="molecule type" value="Genomic_DNA"/>
</dbReference>
<dbReference type="RefSeq" id="NP_833722.1">
    <property type="nucleotide sequence ID" value="NC_004722.1"/>
</dbReference>
<dbReference type="RefSeq" id="WP_001007608.1">
    <property type="nucleotide sequence ID" value="NZ_CP138336.1"/>
</dbReference>
<dbReference type="SMR" id="Q819H7"/>
<dbReference type="STRING" id="226900.BC_4003"/>
<dbReference type="KEGG" id="bce:BC4003"/>
<dbReference type="PATRIC" id="fig|226900.8.peg.4131"/>
<dbReference type="HOGENOM" id="CLU_013175_0_0_9"/>
<dbReference type="OrthoDB" id="244285at2"/>
<dbReference type="UniPathway" id="UPA00051">
    <property type="reaction ID" value="UER00082"/>
</dbReference>
<dbReference type="Proteomes" id="UP000001417">
    <property type="component" value="Chromosome"/>
</dbReference>
<dbReference type="GO" id="GO:0003871">
    <property type="term" value="F:5-methyltetrahydropteroyltriglutamate-homocysteine S-methyltransferase activity"/>
    <property type="evidence" value="ECO:0007669"/>
    <property type="project" value="UniProtKB-UniRule"/>
</dbReference>
<dbReference type="GO" id="GO:0008270">
    <property type="term" value="F:zinc ion binding"/>
    <property type="evidence" value="ECO:0007669"/>
    <property type="project" value="InterPro"/>
</dbReference>
<dbReference type="GO" id="GO:0009086">
    <property type="term" value="P:methionine biosynthetic process"/>
    <property type="evidence" value="ECO:0007669"/>
    <property type="project" value="UniProtKB-UniRule"/>
</dbReference>
<dbReference type="GO" id="GO:0032259">
    <property type="term" value="P:methylation"/>
    <property type="evidence" value="ECO:0007669"/>
    <property type="project" value="UniProtKB-KW"/>
</dbReference>
<dbReference type="CDD" id="cd03311">
    <property type="entry name" value="CIMS_C_terminal_like"/>
    <property type="match status" value="1"/>
</dbReference>
<dbReference type="CDD" id="cd03312">
    <property type="entry name" value="CIMS_N_terminal_like"/>
    <property type="match status" value="1"/>
</dbReference>
<dbReference type="Gene3D" id="3.20.20.210">
    <property type="match status" value="2"/>
</dbReference>
<dbReference type="HAMAP" id="MF_00172">
    <property type="entry name" value="Meth_synth"/>
    <property type="match status" value="1"/>
</dbReference>
<dbReference type="InterPro" id="IPR013215">
    <property type="entry name" value="Cbl-indep_Met_Synth_N"/>
</dbReference>
<dbReference type="InterPro" id="IPR006276">
    <property type="entry name" value="Cobalamin-indep_Met_synthase"/>
</dbReference>
<dbReference type="InterPro" id="IPR002629">
    <property type="entry name" value="Met_Synth_C/arc"/>
</dbReference>
<dbReference type="InterPro" id="IPR038071">
    <property type="entry name" value="UROD/MetE-like_sf"/>
</dbReference>
<dbReference type="NCBIfam" id="TIGR01371">
    <property type="entry name" value="met_syn_B12ind"/>
    <property type="match status" value="1"/>
</dbReference>
<dbReference type="NCBIfam" id="NF003556">
    <property type="entry name" value="PRK05222.1"/>
    <property type="match status" value="1"/>
</dbReference>
<dbReference type="PANTHER" id="PTHR30519">
    <property type="entry name" value="5-METHYLTETRAHYDROPTEROYLTRIGLUTAMATE--HOMOCYSTEINE METHYLTRANSFERASE"/>
    <property type="match status" value="1"/>
</dbReference>
<dbReference type="Pfam" id="PF08267">
    <property type="entry name" value="Meth_synt_1"/>
    <property type="match status" value="1"/>
</dbReference>
<dbReference type="Pfam" id="PF01717">
    <property type="entry name" value="Meth_synt_2"/>
    <property type="match status" value="1"/>
</dbReference>
<dbReference type="PIRSF" id="PIRSF000382">
    <property type="entry name" value="MeTrfase_B12_ind"/>
    <property type="match status" value="1"/>
</dbReference>
<dbReference type="SUPFAM" id="SSF51726">
    <property type="entry name" value="UROD/MetE-like"/>
    <property type="match status" value="2"/>
</dbReference>
<feature type="chain" id="PRO_0000098611" description="5-methyltetrahydropteroyltriglutamate--homocysteine methyltransferase">
    <location>
        <begin position="1"/>
        <end position="762"/>
    </location>
</feature>
<feature type="active site" description="Proton donor" evidence="1">
    <location>
        <position position="698"/>
    </location>
</feature>
<feature type="binding site" evidence="1">
    <location>
        <begin position="17"/>
        <end position="20"/>
    </location>
    <ligand>
        <name>5-methyltetrahydropteroyltri-L-glutamate</name>
        <dbReference type="ChEBI" id="CHEBI:58207"/>
    </ligand>
</feature>
<feature type="binding site" evidence="1">
    <location>
        <position position="111"/>
    </location>
    <ligand>
        <name>5-methyltetrahydropteroyltri-L-glutamate</name>
        <dbReference type="ChEBI" id="CHEBI:58207"/>
    </ligand>
</feature>
<feature type="binding site" evidence="1">
    <location>
        <begin position="435"/>
        <end position="437"/>
    </location>
    <ligand>
        <name>L-homocysteine</name>
        <dbReference type="ChEBI" id="CHEBI:58199"/>
    </ligand>
</feature>
<feature type="binding site" evidence="1">
    <location>
        <begin position="435"/>
        <end position="437"/>
    </location>
    <ligand>
        <name>L-methionine</name>
        <dbReference type="ChEBI" id="CHEBI:57844"/>
    </ligand>
</feature>
<feature type="binding site" evidence="1">
    <location>
        <position position="488"/>
    </location>
    <ligand>
        <name>L-homocysteine</name>
        <dbReference type="ChEBI" id="CHEBI:58199"/>
    </ligand>
</feature>
<feature type="binding site" evidence="1">
    <location>
        <position position="488"/>
    </location>
    <ligand>
        <name>L-methionine</name>
        <dbReference type="ChEBI" id="CHEBI:57844"/>
    </ligand>
</feature>
<feature type="binding site" evidence="1">
    <location>
        <begin position="519"/>
        <end position="520"/>
    </location>
    <ligand>
        <name>5-methyltetrahydropteroyltri-L-glutamate</name>
        <dbReference type="ChEBI" id="CHEBI:58207"/>
    </ligand>
</feature>
<feature type="binding site" evidence="1">
    <location>
        <position position="565"/>
    </location>
    <ligand>
        <name>5-methyltetrahydropteroyltri-L-glutamate</name>
        <dbReference type="ChEBI" id="CHEBI:58207"/>
    </ligand>
</feature>
<feature type="binding site" evidence="1">
    <location>
        <position position="603"/>
    </location>
    <ligand>
        <name>L-homocysteine</name>
        <dbReference type="ChEBI" id="CHEBI:58199"/>
    </ligand>
</feature>
<feature type="binding site" evidence="1">
    <location>
        <position position="603"/>
    </location>
    <ligand>
        <name>L-methionine</name>
        <dbReference type="ChEBI" id="CHEBI:57844"/>
    </ligand>
</feature>
<feature type="binding site" evidence="1">
    <location>
        <position position="609"/>
    </location>
    <ligand>
        <name>5-methyltetrahydropteroyltri-L-glutamate</name>
        <dbReference type="ChEBI" id="CHEBI:58207"/>
    </ligand>
</feature>
<feature type="binding site" evidence="1">
    <location>
        <position position="645"/>
    </location>
    <ligand>
        <name>Zn(2+)</name>
        <dbReference type="ChEBI" id="CHEBI:29105"/>
        <note>catalytic</note>
    </ligand>
</feature>
<feature type="binding site" evidence="1">
    <location>
        <position position="647"/>
    </location>
    <ligand>
        <name>Zn(2+)</name>
        <dbReference type="ChEBI" id="CHEBI:29105"/>
        <note>catalytic</note>
    </ligand>
</feature>
<feature type="binding site" evidence="1">
    <location>
        <position position="669"/>
    </location>
    <ligand>
        <name>Zn(2+)</name>
        <dbReference type="ChEBI" id="CHEBI:29105"/>
        <note>catalytic</note>
    </ligand>
</feature>
<feature type="binding site" evidence="1">
    <location>
        <position position="730"/>
    </location>
    <ligand>
        <name>Zn(2+)</name>
        <dbReference type="ChEBI" id="CHEBI:29105"/>
        <note>catalytic</note>
    </ligand>
</feature>
<keyword id="KW-0028">Amino-acid biosynthesis</keyword>
<keyword id="KW-0479">Metal-binding</keyword>
<keyword id="KW-0486">Methionine biosynthesis</keyword>
<keyword id="KW-0489">Methyltransferase</keyword>
<keyword id="KW-1185">Reference proteome</keyword>
<keyword id="KW-0677">Repeat</keyword>
<keyword id="KW-0808">Transferase</keyword>
<keyword id="KW-0862">Zinc</keyword>
<name>METE_BACCR</name>
<comment type="function">
    <text evidence="1">Catalyzes the transfer of a methyl group from 5-methyltetrahydrofolate to homocysteine resulting in methionine formation.</text>
</comment>
<comment type="catalytic activity">
    <reaction evidence="1">
        <text>5-methyltetrahydropteroyltri-L-glutamate + L-homocysteine = tetrahydropteroyltri-L-glutamate + L-methionine</text>
        <dbReference type="Rhea" id="RHEA:21196"/>
        <dbReference type="ChEBI" id="CHEBI:57844"/>
        <dbReference type="ChEBI" id="CHEBI:58140"/>
        <dbReference type="ChEBI" id="CHEBI:58199"/>
        <dbReference type="ChEBI" id="CHEBI:58207"/>
        <dbReference type="EC" id="2.1.1.14"/>
    </reaction>
</comment>
<comment type="cofactor">
    <cofactor evidence="1">
        <name>Zn(2+)</name>
        <dbReference type="ChEBI" id="CHEBI:29105"/>
    </cofactor>
    <text evidence="1">Binds 1 zinc ion per subunit.</text>
</comment>
<comment type="pathway">
    <text evidence="1">Amino-acid biosynthesis; L-methionine biosynthesis via de novo pathway; L-methionine from L-homocysteine (MetE route): step 1/1.</text>
</comment>
<comment type="similarity">
    <text evidence="1">Belongs to the vitamin-B12 independent methionine synthase family.</text>
</comment>
<reference key="1">
    <citation type="journal article" date="2003" name="Nature">
        <title>Genome sequence of Bacillus cereus and comparative analysis with Bacillus anthracis.</title>
        <authorList>
            <person name="Ivanova N."/>
            <person name="Sorokin A."/>
            <person name="Anderson I."/>
            <person name="Galleron N."/>
            <person name="Candelon B."/>
            <person name="Kapatral V."/>
            <person name="Bhattacharyya A."/>
            <person name="Reznik G."/>
            <person name="Mikhailova N."/>
            <person name="Lapidus A."/>
            <person name="Chu L."/>
            <person name="Mazur M."/>
            <person name="Goltsman E."/>
            <person name="Larsen N."/>
            <person name="D'Souza M."/>
            <person name="Walunas T."/>
            <person name="Grechkin Y."/>
            <person name="Pusch G."/>
            <person name="Haselkorn R."/>
            <person name="Fonstein M."/>
            <person name="Ehrlich S.D."/>
            <person name="Overbeek R."/>
            <person name="Kyrpides N.C."/>
        </authorList>
    </citation>
    <scope>NUCLEOTIDE SEQUENCE [LARGE SCALE GENOMIC DNA]</scope>
    <source>
        <strain>ATCC 14579 / DSM 31 / CCUG 7414 / JCM 2152 / NBRC 15305 / NCIMB 9373 / NCTC 2599 / NRRL B-3711</strain>
    </source>
</reference>
<evidence type="ECO:0000255" key="1">
    <source>
        <dbReference type="HAMAP-Rule" id="MF_00172"/>
    </source>
</evidence>
<proteinExistence type="inferred from homology"/>